<gene>
    <name evidence="10" type="primary">fzo-1</name>
    <name evidence="10" type="ORF">ZK1248.14</name>
</gene>
<dbReference type="EC" id="3.6.5.-" evidence="2"/>
<dbReference type="EMBL" id="BX284602">
    <property type="protein sequence ID" value="CCD72511.1"/>
    <property type="molecule type" value="Genomic_DNA"/>
</dbReference>
<dbReference type="PIR" id="T34496">
    <property type="entry name" value="T34496"/>
</dbReference>
<dbReference type="RefSeq" id="NP_495161.1">
    <property type="nucleotide sequence ID" value="NM_062760.8"/>
</dbReference>
<dbReference type="SMR" id="Q23424"/>
<dbReference type="BioGRID" id="39331">
    <property type="interactions" value="15"/>
</dbReference>
<dbReference type="FunCoup" id="Q23424">
    <property type="interactions" value="3066"/>
</dbReference>
<dbReference type="STRING" id="6239.ZK1248.14.1"/>
<dbReference type="iPTMnet" id="Q23424"/>
<dbReference type="PaxDb" id="6239-ZK1248.14"/>
<dbReference type="PeptideAtlas" id="Q23424"/>
<dbReference type="EnsemblMetazoa" id="ZK1248.14.1">
    <property type="protein sequence ID" value="ZK1248.14.1"/>
    <property type="gene ID" value="WBGene00001509"/>
</dbReference>
<dbReference type="GeneID" id="173990"/>
<dbReference type="KEGG" id="cel:CELE_ZK1248.14"/>
<dbReference type="UCSC" id="ZK1248.14">
    <property type="organism name" value="c. elegans"/>
</dbReference>
<dbReference type="AGR" id="WB:WBGene00001509"/>
<dbReference type="CTD" id="173990"/>
<dbReference type="WormBase" id="ZK1248.14">
    <property type="protein sequence ID" value="CE02898"/>
    <property type="gene ID" value="WBGene00001509"/>
    <property type="gene designation" value="fzo-1"/>
</dbReference>
<dbReference type="eggNOG" id="KOG0448">
    <property type="taxonomic scope" value="Eukaryota"/>
</dbReference>
<dbReference type="GeneTree" id="ENSGT00390000013727"/>
<dbReference type="HOGENOM" id="CLU_021212_1_0_1"/>
<dbReference type="InParanoid" id="Q23424"/>
<dbReference type="OMA" id="YRINCES"/>
<dbReference type="OrthoDB" id="6256226at2759"/>
<dbReference type="PhylomeDB" id="Q23424"/>
<dbReference type="Reactome" id="R-CEL-5205685">
    <property type="pathway name" value="PINK1-PRKN Mediated Mitophagy"/>
</dbReference>
<dbReference type="Reactome" id="R-CEL-9013419">
    <property type="pathway name" value="RHOT2 GTPase cycle"/>
</dbReference>
<dbReference type="Reactome" id="R-CEL-983231">
    <property type="pathway name" value="Factors involved in megakaryocyte development and platelet production"/>
</dbReference>
<dbReference type="PRO" id="PR:Q23424"/>
<dbReference type="Proteomes" id="UP000001940">
    <property type="component" value="Chromosome II"/>
</dbReference>
<dbReference type="Bgee" id="WBGene00001509">
    <property type="expression patterns" value="Expressed in germ line (C elegans) and 4 other cell types or tissues"/>
</dbReference>
<dbReference type="GO" id="GO:0005741">
    <property type="term" value="C:mitochondrial outer membrane"/>
    <property type="evidence" value="ECO:0000318"/>
    <property type="project" value="GO_Central"/>
</dbReference>
<dbReference type="GO" id="GO:0005525">
    <property type="term" value="F:GTP binding"/>
    <property type="evidence" value="ECO:0007669"/>
    <property type="project" value="UniProtKB-KW"/>
</dbReference>
<dbReference type="GO" id="GO:0003924">
    <property type="term" value="F:GTPase activity"/>
    <property type="evidence" value="ECO:0000318"/>
    <property type="project" value="GO_Central"/>
</dbReference>
<dbReference type="GO" id="GO:0008053">
    <property type="term" value="P:mitochondrial fusion"/>
    <property type="evidence" value="ECO:0000315"/>
    <property type="project" value="WormBase"/>
</dbReference>
<dbReference type="GO" id="GO:0051646">
    <property type="term" value="P:mitochondrion localization"/>
    <property type="evidence" value="ECO:0000318"/>
    <property type="project" value="GO_Central"/>
</dbReference>
<dbReference type="CDD" id="cd09912">
    <property type="entry name" value="DLP_2"/>
    <property type="match status" value="1"/>
</dbReference>
<dbReference type="FunFam" id="3.40.50.300:FF:000214">
    <property type="entry name" value="Mitofusin 2"/>
    <property type="match status" value="1"/>
</dbReference>
<dbReference type="Gene3D" id="3.40.50.300">
    <property type="entry name" value="P-loop containing nucleotide triphosphate hydrolases"/>
    <property type="match status" value="1"/>
</dbReference>
<dbReference type="InterPro" id="IPR045063">
    <property type="entry name" value="Dynamin_N"/>
</dbReference>
<dbReference type="InterPro" id="IPR006884">
    <property type="entry name" value="Fzo/mitofusin_HR2"/>
</dbReference>
<dbReference type="InterPro" id="IPR030381">
    <property type="entry name" value="G_DYNAMIN_dom"/>
</dbReference>
<dbReference type="InterPro" id="IPR027094">
    <property type="entry name" value="Mitofusin_fam"/>
</dbReference>
<dbReference type="InterPro" id="IPR027417">
    <property type="entry name" value="P-loop_NTPase"/>
</dbReference>
<dbReference type="PANTHER" id="PTHR10465">
    <property type="entry name" value="TRANSMEMBRANE GTPASE FZO1"/>
    <property type="match status" value="1"/>
</dbReference>
<dbReference type="PANTHER" id="PTHR10465:SF3">
    <property type="entry name" value="TRANSMEMBRANE GTPASE MARF-RELATED"/>
    <property type="match status" value="1"/>
</dbReference>
<dbReference type="Pfam" id="PF00350">
    <property type="entry name" value="Dynamin_N"/>
    <property type="match status" value="1"/>
</dbReference>
<dbReference type="Pfam" id="PF04799">
    <property type="entry name" value="Fzo_mitofusin"/>
    <property type="match status" value="1"/>
</dbReference>
<dbReference type="SUPFAM" id="SSF111479">
    <property type="entry name" value="Fzo-like conserved region"/>
    <property type="match status" value="1"/>
</dbReference>
<dbReference type="SUPFAM" id="SSF52540">
    <property type="entry name" value="P-loop containing nucleoside triphosphate hydrolases"/>
    <property type="match status" value="1"/>
</dbReference>
<dbReference type="PROSITE" id="PS51718">
    <property type="entry name" value="G_DYNAMIN_2"/>
    <property type="match status" value="1"/>
</dbReference>
<proteinExistence type="evidence at protein level"/>
<organism>
    <name type="scientific">Caenorhabditis elegans</name>
    <dbReference type="NCBI Taxonomy" id="6239"/>
    <lineage>
        <taxon>Eukaryota</taxon>
        <taxon>Metazoa</taxon>
        <taxon>Ecdysozoa</taxon>
        <taxon>Nematoda</taxon>
        <taxon>Chromadorea</taxon>
        <taxon>Rhabditida</taxon>
        <taxon>Rhabditina</taxon>
        <taxon>Rhabditomorpha</taxon>
        <taxon>Rhabditoidea</taxon>
        <taxon>Rhabditidae</taxon>
        <taxon>Peloderinae</taxon>
        <taxon>Caenorhabditis</taxon>
    </lineage>
</organism>
<comment type="function">
    <text evidence="1 6 8">Probable transmembrane GTPase (By similarity). Mediates mitochondrial fusion (PubMed:18722182, PubMed:19327994, PubMed:21248201, PubMed:25190516, PubMed:33734301). Fusion of mitochondria occurs in many cell types and constitutes an important step in mitochondria morphology, which is balanced between fusion and fission (By similarity). Dispensable for normal apoptotic processes during embryonic development (PubMed:18722182).</text>
</comment>
<comment type="catalytic activity">
    <reaction evidence="2">
        <text>GTP + H2O = GDP + phosphate + H(+)</text>
        <dbReference type="Rhea" id="RHEA:19669"/>
        <dbReference type="ChEBI" id="CHEBI:15377"/>
        <dbReference type="ChEBI" id="CHEBI:15378"/>
        <dbReference type="ChEBI" id="CHEBI:37565"/>
        <dbReference type="ChEBI" id="CHEBI:43474"/>
        <dbReference type="ChEBI" id="CHEBI:58189"/>
    </reaction>
</comment>
<comment type="subunit">
    <text evidence="7">Interacts with ced-9; interaction may be suppressed by interaction of ced-9 with egl-1.</text>
</comment>
<comment type="subcellular location">
    <subcellularLocation>
        <location evidence="2">Mitochondrion outer membrane</location>
        <topology evidence="2">Multi-pass membrane protein</topology>
    </subcellularLocation>
</comment>
<comment type="disruption phenotype">
    <text evidence="6 8">RNAi-mediated knockdown results in fragmented mitochondria, most likely due to lack of fusion activity (PubMed:25190516, PubMed:33734301). RNAi-mediated knockdown in a moma-1 mutant background results in mitochondrial fragmentation (PubMed:21248201). In a drp-1 mutant background, partially restores some tubular mitochondria (PubMed:33734301). Upon acute heat stress, in a drp-1 mutant background, autophagosomes clustered at mitochondria are detected in the epidermis (PubMed:33734301).</text>
</comment>
<comment type="similarity">
    <text evidence="4">Belongs to the TRAFAC class dynamin-like GTPase superfamily. Dynamin/Fzo/YdjA family. Mitofusin subfamily.</text>
</comment>
<evidence type="ECO:0000250" key="1">
    <source>
        <dbReference type="UniProtKB" id="P38297"/>
    </source>
</evidence>
<evidence type="ECO:0000250" key="2">
    <source>
        <dbReference type="UniProtKB" id="Q8IWA4"/>
    </source>
</evidence>
<evidence type="ECO:0000255" key="3"/>
<evidence type="ECO:0000255" key="4">
    <source>
        <dbReference type="PROSITE-ProRule" id="PRU01055"/>
    </source>
</evidence>
<evidence type="ECO:0000256" key="5">
    <source>
        <dbReference type="SAM" id="MobiDB-lite"/>
    </source>
</evidence>
<evidence type="ECO:0000269" key="6">
    <source>
    </source>
</evidence>
<evidence type="ECO:0000269" key="7">
    <source>
    </source>
</evidence>
<evidence type="ECO:0000269" key="8">
    <source>
    </source>
</evidence>
<evidence type="ECO:0000305" key="9"/>
<evidence type="ECO:0000312" key="10">
    <source>
        <dbReference type="WormBase" id="ZK1248.14"/>
    </source>
</evidence>
<name>FZO1_CAEEL</name>
<feature type="chain" id="PRO_0000127678" description="Transmembrane GTPase fzo-1">
    <location>
        <begin position="1"/>
        <end position="774"/>
    </location>
</feature>
<feature type="topological domain" description="Cytoplasmic" evidence="3">
    <location>
        <begin position="1"/>
        <end position="617"/>
    </location>
</feature>
<feature type="transmembrane region" description="Helical; Name=1" evidence="3">
    <location>
        <begin position="618"/>
        <end position="638"/>
    </location>
</feature>
<feature type="topological domain" description="Mitochondrial intermembrane" evidence="3">
    <location>
        <begin position="639"/>
        <end position="640"/>
    </location>
</feature>
<feature type="transmembrane region" description="Helical; Name=2" evidence="3">
    <location>
        <begin position="641"/>
        <end position="661"/>
    </location>
</feature>
<feature type="topological domain" description="Cytoplasmic" evidence="3">
    <location>
        <begin position="662"/>
        <end position="774"/>
    </location>
</feature>
<feature type="domain" description="Dynamin-type G" evidence="4">
    <location>
        <begin position="97"/>
        <end position="352"/>
    </location>
</feature>
<feature type="region of interest" description="Disordered" evidence="5">
    <location>
        <begin position="1"/>
        <end position="29"/>
    </location>
</feature>
<feature type="region of interest" description="G1 motif" evidence="4">
    <location>
        <begin position="107"/>
        <end position="114"/>
    </location>
</feature>
<feature type="region of interest" description="G2 motif" evidence="4">
    <location>
        <begin position="133"/>
        <end position="134"/>
    </location>
</feature>
<feature type="region of interest" description="G3 motif" evidence="4">
    <location>
        <begin position="211"/>
        <end position="214"/>
    </location>
</feature>
<feature type="region of interest" description="G4 motif" evidence="4">
    <location>
        <begin position="270"/>
        <end position="273"/>
    </location>
</feature>
<feature type="region of interest" description="G5 motif" evidence="4">
    <location>
        <position position="300"/>
    </location>
</feature>
<feature type="coiled-coil region" evidence="3">
    <location>
        <begin position="51"/>
        <end position="71"/>
    </location>
</feature>
<feature type="coiled-coil region" evidence="3">
    <location>
        <begin position="385"/>
        <end position="415"/>
    </location>
</feature>
<feature type="compositionally biased region" description="Basic residues" evidence="5">
    <location>
        <begin position="20"/>
        <end position="29"/>
    </location>
</feature>
<feature type="binding site" evidence="2">
    <location>
        <begin position="110"/>
        <end position="115"/>
    </location>
    <ligand>
        <name>GTP</name>
        <dbReference type="ChEBI" id="CHEBI:37565"/>
    </ligand>
</feature>
<feature type="binding site" evidence="2">
    <location>
        <begin position="270"/>
        <end position="273"/>
    </location>
    <ligand>
        <name>GTP</name>
        <dbReference type="ChEBI" id="CHEBI:37565"/>
    </ligand>
</feature>
<feature type="binding site" evidence="2">
    <location>
        <position position="317"/>
    </location>
    <ligand>
        <name>GTP</name>
        <dbReference type="ChEBI" id="CHEBI:37565"/>
    </ligand>
</feature>
<protein>
    <recommendedName>
        <fullName>Transmembrane GTPase fzo-1</fullName>
        <ecNumber evidence="2">3.6.5.-</ecNumber>
    </recommendedName>
</protein>
<sequence length="774" mass="87462">MSGTASLVHTLPASGDSNHRGLHSLKNSRRAADNEPLLRFREAKKVLGDVYGELKDNVAELEGVYKDIKENDFVSSEQREEIEAIGDSIKTIMDTFQRDNMKVVFFGRTSNGKSTTINAMLHEKVLPQGMGHTTCCFLQVEGSEGEVGHLQLDDNPQKIDMKMLGKIGHALSDENSDLPAMGQDSLLKVFHPKKSESGECRLLQNDVVILDSPGVDLSPEFDSWIDKHCLDADVFVLVSNAESTLTQAEKNFFLRVAKKLSKPNVFILNNRWDASAAETENIEDVKKQHLTRFRQFLVDELEVCSEREVNDRIFFVSSREVLESRLKARGLVQKAYQAEGHGTRALEFQNFERHFEHCISRSAIHTKFEAHNRRAHEMIGKMRLNLNSVLTSAAEQRSKLQNNLNESTRTFNECRVNFTQFEKAYREQTEQLRAEVHLKVSADFFEEIARLDAIIDRFEQPFDGSSSGMTKYKEDLAIFVDKCLSSDLEARCTGGLMSRIWNLENDMFQYVTKILAEPYQNKLEEVWRYRAPFKFSICVDVPALVNDFHEDLEFRFTFGLHAIIRRIIAYRSGQPVTAINTNLLTPLSLKQQSEKNSVRDAEASAASEEQAMMTQMVLTSAAFLANGSLGVLVVGGIVYKAVGWRVIAVGGAAYAGLYAWERMRWNSGAKEQHLKEQFRSHLAARMQQVSTAHTHHCETQAIREMDQVFDGLKATVGGVHREMKNDLDVQKTQIDAVDSTIRTLGTIKGKAVFLLRNLEQFASSYLRSDSPPTP</sequence>
<reference key="1">
    <citation type="journal article" date="1998" name="Science">
        <title>Genome sequence of the nematode C. elegans: a platform for investigating biology.</title>
        <authorList>
            <consortium name="The C. elegans sequencing consortium"/>
        </authorList>
    </citation>
    <scope>NUCLEOTIDE SEQUENCE [LARGE SCALE GENOMIC DNA]</scope>
    <source>
        <strain>Bristol N2</strain>
    </source>
</reference>
<reference key="2">
    <citation type="journal article" date="2008" name="Mol. Cell">
        <title>Caenorhabditis elegans drp-1 and fis-2 regulate distinct cell-death execution pathways downstream of ced-3 and independent of ced-9.</title>
        <authorList>
            <person name="Breckenridge D.G."/>
            <person name="Kang B.H."/>
            <person name="Kokel D."/>
            <person name="Mitani S."/>
            <person name="Staehelin L.A."/>
            <person name="Xue D."/>
        </authorList>
    </citation>
    <scope>FUNCTION</scope>
</reference>
<reference key="3">
    <citation type="journal article" date="2009" name="Curr. Biol.">
        <title>Bcl-2 proteins EGL-1 and CED-9 do not regulate mitochondrial fission or fusion in Caenorhabditis elegans.</title>
        <authorList>
            <person name="Breckenridge D.G."/>
            <person name="Kang B.H."/>
            <person name="Xue D."/>
        </authorList>
    </citation>
    <scope>FUNCTION</scope>
</reference>
<reference key="4">
    <citation type="journal article" date="2011" name="Mol. Biol. Cell">
        <title>A novel mitochondrial outer membrane protein, MOMA-1, that affects cristae morphology in Caenorhabditis elegans.</title>
        <authorList>
            <person name="Head B.P."/>
            <person name="Zulaika M."/>
            <person name="Ryazantsev S."/>
            <person name="van der Bliek A.M."/>
        </authorList>
    </citation>
    <scope>FUNCTION</scope>
    <scope>DISRUPTION PHENOTYPE</scope>
</reference>
<reference evidence="9" key="5">
    <citation type="journal article" date="2011" name="Proc. Natl. Acad. Sci. U.S.A.">
        <title>A molecular switch that governs mitochondrial fusion and fission mediated by the BCL2-like protein CED-9 of Caenorhabditis elegans.</title>
        <authorList>
            <person name="Lu Y."/>
            <person name="Rolland S.G."/>
            <person name="Conradt B."/>
        </authorList>
    </citation>
    <scope>INTERACTION WITH CED-9</scope>
</reference>
<reference key="6">
    <citation type="journal article" date="2014" name="EMBO J.">
        <title>The small GTPase Arf1 modulates mitochondrial morphology and function.</title>
        <authorList>
            <person name="Ackema K.B."/>
            <person name="Hench J."/>
            <person name="Boeckler S."/>
            <person name="Wang S.C."/>
            <person name="Sauder U."/>
            <person name="Mergentaler H."/>
            <person name="Westermann B."/>
            <person name="Bard F."/>
            <person name="Frank S."/>
            <person name="Spang A."/>
        </authorList>
    </citation>
    <scope>FUNCTION</scope>
    <scope>DISRUPTION PHENOTYPE</scope>
</reference>
<reference key="7">
    <citation type="journal article" date="2021" name="J. Cell Biol.">
        <title>Autophagy facilitates mitochondrial rebuilding after acute heat stress via a DRP-1-dependent process.</title>
        <authorList>
            <person name="Chen Y."/>
            <person name="Leboutet R."/>
            <person name="Largeau C."/>
            <person name="Zentout S."/>
            <person name="Lefebvre C."/>
            <person name="Delahodde A."/>
            <person name="Culetto E."/>
            <person name="Legouis R."/>
        </authorList>
    </citation>
    <scope>FUNCTION</scope>
    <scope>DISRUPTION PHENOTYPE</scope>
</reference>
<keyword id="KW-0175">Coiled coil</keyword>
<keyword id="KW-0342">GTP-binding</keyword>
<keyword id="KW-0378">Hydrolase</keyword>
<keyword id="KW-0472">Membrane</keyword>
<keyword id="KW-0496">Mitochondrion</keyword>
<keyword id="KW-1000">Mitochondrion outer membrane</keyword>
<keyword id="KW-0547">Nucleotide-binding</keyword>
<keyword id="KW-1185">Reference proteome</keyword>
<keyword id="KW-0812">Transmembrane</keyword>
<keyword id="KW-1133">Transmembrane helix</keyword>
<accession>Q23424</accession>